<sequence>MTGIAAASFFSNTCRFGGCGLHFPTLADLIEHIEDNHIDTDPRVLEKQELQQPTYVALSYINRFMTDAARREQESLKKKIQPKLSLTLSSSVSRGNVSTPPRHSSGSLTPPVTPPITPSSSFRSSTPTGSEYDEEEVDYEESDSDESWTTESAISSEAILSSMCMNGGEEKPFACPVPGCKKRYKNVNGIKYHAKNGHRTQIRVRKPFKCRCGKSYKTAQGLRHHTINFHPPVSAEIIRKMQQ</sequence>
<feature type="chain" id="PRO_0000046987" description="Juxtaposed with another zinc finger protein 1">
    <location>
        <begin position="1"/>
        <end position="243"/>
    </location>
</feature>
<feature type="zinc finger region" description="C2H2-type 1">
    <location>
        <begin position="12"/>
        <end position="37"/>
    </location>
</feature>
<feature type="zinc finger region" description="C2H2-type 2">
    <location>
        <begin position="173"/>
        <end position="198"/>
    </location>
</feature>
<feature type="zinc finger region" description="C2H2-type 3; degenerate">
    <location>
        <begin position="208"/>
        <end position="230"/>
    </location>
</feature>
<feature type="region of interest" description="Required for interaction with NR2C2" evidence="2">
    <location>
        <begin position="39"/>
        <end position="79"/>
    </location>
</feature>
<feature type="region of interest" description="Disordered" evidence="3">
    <location>
        <begin position="89"/>
        <end position="151"/>
    </location>
</feature>
<feature type="compositionally biased region" description="Polar residues" evidence="3">
    <location>
        <begin position="89"/>
        <end position="108"/>
    </location>
</feature>
<feature type="compositionally biased region" description="Low complexity" evidence="3">
    <location>
        <begin position="118"/>
        <end position="130"/>
    </location>
</feature>
<feature type="compositionally biased region" description="Acidic residues" evidence="3">
    <location>
        <begin position="131"/>
        <end position="148"/>
    </location>
</feature>
<feature type="modified residue" description="Phosphothreonine" evidence="1">
    <location>
        <position position="109"/>
    </location>
</feature>
<feature type="modified residue" description="Phosphothreonine" evidence="2">
    <location>
        <position position="113"/>
    </location>
</feature>
<accession>Q5RDF5</accession>
<organism>
    <name type="scientific">Pongo abelii</name>
    <name type="common">Sumatran orangutan</name>
    <name type="synonym">Pongo pygmaeus abelii</name>
    <dbReference type="NCBI Taxonomy" id="9601"/>
    <lineage>
        <taxon>Eukaryota</taxon>
        <taxon>Metazoa</taxon>
        <taxon>Chordata</taxon>
        <taxon>Craniata</taxon>
        <taxon>Vertebrata</taxon>
        <taxon>Euteleostomi</taxon>
        <taxon>Mammalia</taxon>
        <taxon>Eutheria</taxon>
        <taxon>Euarchontoglires</taxon>
        <taxon>Primates</taxon>
        <taxon>Haplorrhini</taxon>
        <taxon>Catarrhini</taxon>
        <taxon>Hominidae</taxon>
        <taxon>Pongo</taxon>
    </lineage>
</organism>
<dbReference type="EMBL" id="CR857957">
    <property type="protein sequence ID" value="CAH90202.1"/>
    <property type="molecule type" value="mRNA"/>
</dbReference>
<dbReference type="RefSeq" id="NP_001125076.1">
    <property type="nucleotide sequence ID" value="NM_001131604.1"/>
</dbReference>
<dbReference type="FunCoup" id="Q5RDF5">
    <property type="interactions" value="1672"/>
</dbReference>
<dbReference type="STRING" id="9601.ENSPPYP00000019829"/>
<dbReference type="Ensembl" id="ENSPPYT00000020612.2">
    <property type="protein sequence ID" value="ENSPPYP00000019829.2"/>
    <property type="gene ID" value="ENSPPYG00000017691.2"/>
</dbReference>
<dbReference type="GeneID" id="100171957"/>
<dbReference type="KEGG" id="pon:100171957"/>
<dbReference type="CTD" id="221895"/>
<dbReference type="eggNOG" id="KOG4124">
    <property type="taxonomic scope" value="Eukaryota"/>
</dbReference>
<dbReference type="GeneTree" id="ENSGT00390000003635"/>
<dbReference type="InParanoid" id="Q5RDF5"/>
<dbReference type="OMA" id="CLWHGCG"/>
<dbReference type="OrthoDB" id="9533370at2759"/>
<dbReference type="Proteomes" id="UP000001595">
    <property type="component" value="Chromosome 7"/>
</dbReference>
<dbReference type="GO" id="GO:0005829">
    <property type="term" value="C:cytosol"/>
    <property type="evidence" value="ECO:0007669"/>
    <property type="project" value="Ensembl"/>
</dbReference>
<dbReference type="GO" id="GO:0001650">
    <property type="term" value="C:fibrillar center"/>
    <property type="evidence" value="ECO:0007669"/>
    <property type="project" value="Ensembl"/>
</dbReference>
<dbReference type="GO" id="GO:0005654">
    <property type="term" value="C:nucleoplasm"/>
    <property type="evidence" value="ECO:0007669"/>
    <property type="project" value="Ensembl"/>
</dbReference>
<dbReference type="GO" id="GO:0017053">
    <property type="term" value="C:transcription repressor complex"/>
    <property type="evidence" value="ECO:0007669"/>
    <property type="project" value="Ensembl"/>
</dbReference>
<dbReference type="GO" id="GO:0003714">
    <property type="term" value="F:transcription corepressor activity"/>
    <property type="evidence" value="ECO:0007669"/>
    <property type="project" value="Ensembl"/>
</dbReference>
<dbReference type="GO" id="GO:0008270">
    <property type="term" value="F:zinc ion binding"/>
    <property type="evidence" value="ECO:0007669"/>
    <property type="project" value="UniProtKB-KW"/>
</dbReference>
<dbReference type="GO" id="GO:0006629">
    <property type="term" value="P:lipid metabolic process"/>
    <property type="evidence" value="ECO:0007669"/>
    <property type="project" value="UniProtKB-KW"/>
</dbReference>
<dbReference type="GO" id="GO:0000122">
    <property type="term" value="P:negative regulation of transcription by RNA polymerase II"/>
    <property type="evidence" value="ECO:0007669"/>
    <property type="project" value="Ensembl"/>
</dbReference>
<dbReference type="FunFam" id="3.30.160.60:FF:003264">
    <property type="entry name" value="Juxtaposed with another zinc finger protein 1"/>
    <property type="match status" value="1"/>
</dbReference>
<dbReference type="FunFam" id="3.30.160.60:FF:000619">
    <property type="entry name" value="juxtaposed with another zinc finger protein 1"/>
    <property type="match status" value="1"/>
</dbReference>
<dbReference type="Gene3D" id="3.30.160.60">
    <property type="entry name" value="Classic Zinc Finger"/>
    <property type="match status" value="2"/>
</dbReference>
<dbReference type="InterPro" id="IPR051580">
    <property type="entry name" value="ZnF-Chromatin_assoc"/>
</dbReference>
<dbReference type="InterPro" id="IPR036236">
    <property type="entry name" value="Znf_C2H2_sf"/>
</dbReference>
<dbReference type="InterPro" id="IPR013087">
    <property type="entry name" value="Znf_C2H2_type"/>
</dbReference>
<dbReference type="PANTHER" id="PTHR23057">
    <property type="entry name" value="JUXTAPOSED WITH ANOTHER ZINC FINGER PROTEIN 1"/>
    <property type="match status" value="1"/>
</dbReference>
<dbReference type="PANTHER" id="PTHR23057:SF0">
    <property type="entry name" value="JUXTAPOSED WITH ANOTHER ZINC FINGER PROTEIN 1"/>
    <property type="match status" value="1"/>
</dbReference>
<dbReference type="SMART" id="SM00355">
    <property type="entry name" value="ZnF_C2H2"/>
    <property type="match status" value="3"/>
</dbReference>
<dbReference type="SUPFAM" id="SSF57667">
    <property type="entry name" value="beta-beta-alpha zinc fingers"/>
    <property type="match status" value="1"/>
</dbReference>
<dbReference type="PROSITE" id="PS00028">
    <property type="entry name" value="ZINC_FINGER_C2H2_1"/>
    <property type="match status" value="2"/>
</dbReference>
<evidence type="ECO:0000250" key="1">
    <source>
        <dbReference type="UniProtKB" id="Q80ZQ5"/>
    </source>
</evidence>
<evidence type="ECO:0000250" key="2">
    <source>
        <dbReference type="UniProtKB" id="Q86VZ6"/>
    </source>
</evidence>
<evidence type="ECO:0000256" key="3">
    <source>
        <dbReference type="SAM" id="MobiDB-lite"/>
    </source>
</evidence>
<name>JAZF1_PONAB</name>
<protein>
    <recommendedName>
        <fullName>Juxtaposed with another zinc finger protein 1</fullName>
    </recommendedName>
</protein>
<gene>
    <name type="primary">JAZF1</name>
</gene>
<proteinExistence type="evidence at transcript level"/>
<keyword id="KW-0443">Lipid metabolism</keyword>
<keyword id="KW-0479">Metal-binding</keyword>
<keyword id="KW-0539">Nucleus</keyword>
<keyword id="KW-0597">Phosphoprotein</keyword>
<keyword id="KW-1185">Reference proteome</keyword>
<keyword id="KW-0677">Repeat</keyword>
<keyword id="KW-0804">Transcription</keyword>
<keyword id="KW-0805">Transcription regulation</keyword>
<keyword id="KW-0862">Zinc</keyword>
<keyword id="KW-0863">Zinc-finger</keyword>
<comment type="function">
    <text evidence="1 2">Acts as a transcriptional corepressor of orphan nuclear receptor NR2C2. Inhibits expression of the gluconeogenesis enzyme PCK2 through inhibition of NR2C2 activity. Also involved in transcriptional activation of NAMPT by promoting expression of PPARA and PPARD. Plays a role in lipid metabolism by suppressing lipogenesis, increasing lipolysis and decreasing lipid accumulation in adipose tissue. Plays a role in glucose homeostasis by improving glucose metabolism and insulin sensitivity.</text>
</comment>
<comment type="subunit">
    <text evidence="2">Interacts with NR2C2 (via ligand-binding region).</text>
</comment>
<comment type="subcellular location">
    <subcellularLocation>
        <location evidence="2">Nucleus</location>
    </subcellularLocation>
</comment>
<reference key="1">
    <citation type="submission" date="2004-11" db="EMBL/GenBank/DDBJ databases">
        <authorList>
            <consortium name="The German cDNA consortium"/>
        </authorList>
    </citation>
    <scope>NUCLEOTIDE SEQUENCE [LARGE SCALE MRNA]</scope>
    <source>
        <tissue>Heart</tissue>
    </source>
</reference>